<proteinExistence type="inferred from homology"/>
<gene>
    <name evidence="1" type="primary">rpsN</name>
    <name type="ordered locus">BPP0044</name>
</gene>
<dbReference type="EMBL" id="BX640423">
    <property type="protein sequence ID" value="CAE39785.1"/>
    <property type="molecule type" value="Genomic_DNA"/>
</dbReference>
<dbReference type="RefSeq" id="WP_003806919.1">
    <property type="nucleotide sequence ID" value="NC_002928.3"/>
</dbReference>
<dbReference type="SMR" id="Q7W2E2"/>
<dbReference type="GeneID" id="93206274"/>
<dbReference type="KEGG" id="bpa:BPP0044"/>
<dbReference type="HOGENOM" id="CLU_139869_0_1_4"/>
<dbReference type="Proteomes" id="UP000001421">
    <property type="component" value="Chromosome"/>
</dbReference>
<dbReference type="GO" id="GO:0005737">
    <property type="term" value="C:cytoplasm"/>
    <property type="evidence" value="ECO:0007669"/>
    <property type="project" value="UniProtKB-ARBA"/>
</dbReference>
<dbReference type="GO" id="GO:0015935">
    <property type="term" value="C:small ribosomal subunit"/>
    <property type="evidence" value="ECO:0007669"/>
    <property type="project" value="TreeGrafter"/>
</dbReference>
<dbReference type="GO" id="GO:0019843">
    <property type="term" value="F:rRNA binding"/>
    <property type="evidence" value="ECO:0007669"/>
    <property type="project" value="UniProtKB-UniRule"/>
</dbReference>
<dbReference type="GO" id="GO:0003735">
    <property type="term" value="F:structural constituent of ribosome"/>
    <property type="evidence" value="ECO:0007669"/>
    <property type="project" value="InterPro"/>
</dbReference>
<dbReference type="GO" id="GO:0006412">
    <property type="term" value="P:translation"/>
    <property type="evidence" value="ECO:0007669"/>
    <property type="project" value="UniProtKB-UniRule"/>
</dbReference>
<dbReference type="FunFam" id="1.10.287.1480:FF:000001">
    <property type="entry name" value="30S ribosomal protein S14"/>
    <property type="match status" value="1"/>
</dbReference>
<dbReference type="Gene3D" id="1.10.287.1480">
    <property type="match status" value="1"/>
</dbReference>
<dbReference type="HAMAP" id="MF_00537">
    <property type="entry name" value="Ribosomal_uS14_1"/>
    <property type="match status" value="1"/>
</dbReference>
<dbReference type="InterPro" id="IPR001209">
    <property type="entry name" value="Ribosomal_uS14"/>
</dbReference>
<dbReference type="InterPro" id="IPR023036">
    <property type="entry name" value="Ribosomal_uS14_bac/plastid"/>
</dbReference>
<dbReference type="NCBIfam" id="NF006477">
    <property type="entry name" value="PRK08881.1"/>
    <property type="match status" value="1"/>
</dbReference>
<dbReference type="PANTHER" id="PTHR19836">
    <property type="entry name" value="30S RIBOSOMAL PROTEIN S14"/>
    <property type="match status" value="1"/>
</dbReference>
<dbReference type="PANTHER" id="PTHR19836:SF19">
    <property type="entry name" value="SMALL RIBOSOMAL SUBUNIT PROTEIN US14M"/>
    <property type="match status" value="1"/>
</dbReference>
<dbReference type="Pfam" id="PF00253">
    <property type="entry name" value="Ribosomal_S14"/>
    <property type="match status" value="1"/>
</dbReference>
<dbReference type="SUPFAM" id="SSF57716">
    <property type="entry name" value="Glucocorticoid receptor-like (DNA-binding domain)"/>
    <property type="match status" value="1"/>
</dbReference>
<keyword id="KW-0687">Ribonucleoprotein</keyword>
<keyword id="KW-0689">Ribosomal protein</keyword>
<keyword id="KW-0694">RNA-binding</keyword>
<keyword id="KW-0699">rRNA-binding</keyword>
<sequence length="101" mass="11723">MAKLSLINRDIKRAKLADKYAAKRAELKAIIDDQSKTDEERYQARLKLQQLPRNANPTRQRNRCVVTGRPRGVFRKFGLTRHKLREMAMKGEVPGMTKASW</sequence>
<comment type="function">
    <text evidence="1">Binds 16S rRNA, required for the assembly of 30S particles and may also be responsible for determining the conformation of the 16S rRNA at the A site.</text>
</comment>
<comment type="subunit">
    <text evidence="1">Part of the 30S ribosomal subunit. Contacts proteins S3 and S10.</text>
</comment>
<comment type="similarity">
    <text evidence="1">Belongs to the universal ribosomal protein uS14 family.</text>
</comment>
<protein>
    <recommendedName>
        <fullName evidence="1">Small ribosomal subunit protein uS14</fullName>
    </recommendedName>
    <alternativeName>
        <fullName evidence="2">30S ribosomal protein S14</fullName>
    </alternativeName>
</protein>
<organism>
    <name type="scientific">Bordetella parapertussis (strain 12822 / ATCC BAA-587 / NCTC 13253)</name>
    <dbReference type="NCBI Taxonomy" id="257311"/>
    <lineage>
        <taxon>Bacteria</taxon>
        <taxon>Pseudomonadati</taxon>
        <taxon>Pseudomonadota</taxon>
        <taxon>Betaproteobacteria</taxon>
        <taxon>Burkholderiales</taxon>
        <taxon>Alcaligenaceae</taxon>
        <taxon>Bordetella</taxon>
    </lineage>
</organism>
<name>RS14_BORPA</name>
<evidence type="ECO:0000255" key="1">
    <source>
        <dbReference type="HAMAP-Rule" id="MF_00537"/>
    </source>
</evidence>
<evidence type="ECO:0000305" key="2"/>
<reference key="1">
    <citation type="journal article" date="2003" name="Nat. Genet.">
        <title>Comparative analysis of the genome sequences of Bordetella pertussis, Bordetella parapertussis and Bordetella bronchiseptica.</title>
        <authorList>
            <person name="Parkhill J."/>
            <person name="Sebaihia M."/>
            <person name="Preston A."/>
            <person name="Murphy L.D."/>
            <person name="Thomson N.R."/>
            <person name="Harris D.E."/>
            <person name="Holden M.T.G."/>
            <person name="Churcher C.M."/>
            <person name="Bentley S.D."/>
            <person name="Mungall K.L."/>
            <person name="Cerdeno-Tarraga A.-M."/>
            <person name="Temple L."/>
            <person name="James K.D."/>
            <person name="Harris B."/>
            <person name="Quail M.A."/>
            <person name="Achtman M."/>
            <person name="Atkin R."/>
            <person name="Baker S."/>
            <person name="Basham D."/>
            <person name="Bason N."/>
            <person name="Cherevach I."/>
            <person name="Chillingworth T."/>
            <person name="Collins M."/>
            <person name="Cronin A."/>
            <person name="Davis P."/>
            <person name="Doggett J."/>
            <person name="Feltwell T."/>
            <person name="Goble A."/>
            <person name="Hamlin N."/>
            <person name="Hauser H."/>
            <person name="Holroyd S."/>
            <person name="Jagels K."/>
            <person name="Leather S."/>
            <person name="Moule S."/>
            <person name="Norberczak H."/>
            <person name="O'Neil S."/>
            <person name="Ormond D."/>
            <person name="Price C."/>
            <person name="Rabbinowitsch E."/>
            <person name="Rutter S."/>
            <person name="Sanders M."/>
            <person name="Saunders D."/>
            <person name="Seeger K."/>
            <person name="Sharp S."/>
            <person name="Simmonds M."/>
            <person name="Skelton J."/>
            <person name="Squares R."/>
            <person name="Squares S."/>
            <person name="Stevens K."/>
            <person name="Unwin L."/>
            <person name="Whitehead S."/>
            <person name="Barrell B.G."/>
            <person name="Maskell D.J."/>
        </authorList>
    </citation>
    <scope>NUCLEOTIDE SEQUENCE [LARGE SCALE GENOMIC DNA]</scope>
    <source>
        <strain>12822 / ATCC BAA-587 / NCTC 13253</strain>
    </source>
</reference>
<accession>Q7W2E2</accession>
<feature type="chain" id="PRO_1000128314" description="Small ribosomal subunit protein uS14">
    <location>
        <begin position="1"/>
        <end position="101"/>
    </location>
</feature>